<dbReference type="EMBL" id="CP000107">
    <property type="protein sequence ID" value="AAZ68176.1"/>
    <property type="molecule type" value="Genomic_DNA"/>
</dbReference>
<dbReference type="RefSeq" id="WP_011304254.1">
    <property type="nucleotide sequence ID" value="NC_007354.1"/>
</dbReference>
<dbReference type="SMR" id="Q3YSX9"/>
<dbReference type="FunCoup" id="Q3YSX9">
    <property type="interactions" value="138"/>
</dbReference>
<dbReference type="STRING" id="269484.Ecaj_0125"/>
<dbReference type="KEGG" id="ecn:Ecaj_0125"/>
<dbReference type="eggNOG" id="COG1327">
    <property type="taxonomic scope" value="Bacteria"/>
</dbReference>
<dbReference type="HOGENOM" id="CLU_108412_0_1_5"/>
<dbReference type="InParanoid" id="Q3YSX9"/>
<dbReference type="Proteomes" id="UP000000435">
    <property type="component" value="Chromosome"/>
</dbReference>
<dbReference type="GO" id="GO:0005524">
    <property type="term" value="F:ATP binding"/>
    <property type="evidence" value="ECO:0007669"/>
    <property type="project" value="UniProtKB-KW"/>
</dbReference>
<dbReference type="GO" id="GO:0003677">
    <property type="term" value="F:DNA binding"/>
    <property type="evidence" value="ECO:0007669"/>
    <property type="project" value="UniProtKB-KW"/>
</dbReference>
<dbReference type="GO" id="GO:0008270">
    <property type="term" value="F:zinc ion binding"/>
    <property type="evidence" value="ECO:0007669"/>
    <property type="project" value="UniProtKB-UniRule"/>
</dbReference>
<dbReference type="GO" id="GO:0045892">
    <property type="term" value="P:negative regulation of DNA-templated transcription"/>
    <property type="evidence" value="ECO:0007669"/>
    <property type="project" value="UniProtKB-UniRule"/>
</dbReference>
<dbReference type="HAMAP" id="MF_00440">
    <property type="entry name" value="NrdR"/>
    <property type="match status" value="1"/>
</dbReference>
<dbReference type="InterPro" id="IPR005144">
    <property type="entry name" value="ATP-cone_dom"/>
</dbReference>
<dbReference type="InterPro" id="IPR055173">
    <property type="entry name" value="NrdR-like_N"/>
</dbReference>
<dbReference type="InterPro" id="IPR003796">
    <property type="entry name" value="RNR_NrdR-like"/>
</dbReference>
<dbReference type="NCBIfam" id="TIGR00244">
    <property type="entry name" value="transcriptional regulator NrdR"/>
    <property type="match status" value="1"/>
</dbReference>
<dbReference type="PANTHER" id="PTHR30455">
    <property type="entry name" value="TRANSCRIPTIONAL REPRESSOR NRDR"/>
    <property type="match status" value="1"/>
</dbReference>
<dbReference type="PANTHER" id="PTHR30455:SF2">
    <property type="entry name" value="TRANSCRIPTIONAL REPRESSOR NRDR"/>
    <property type="match status" value="1"/>
</dbReference>
<dbReference type="Pfam" id="PF03477">
    <property type="entry name" value="ATP-cone"/>
    <property type="match status" value="1"/>
</dbReference>
<dbReference type="Pfam" id="PF22811">
    <property type="entry name" value="Zn_ribbon_NrdR"/>
    <property type="match status" value="1"/>
</dbReference>
<dbReference type="PROSITE" id="PS51161">
    <property type="entry name" value="ATP_CONE"/>
    <property type="match status" value="1"/>
</dbReference>
<sequence length="153" mass="17734">MKCPFCNNINTQVKDSRAIEDDILIRRRRICLVCNSRFTTIEKLLLRSFMVIKKNGETEPFNKQKLLSSILIATKKRPVSHEGINVMVNNIFYELEGKKENAVPTDVIGKMVMDNLFKLDKVAYVRFASVYMNFKNINDFSNIIAKIINEQIL</sequence>
<gene>
    <name evidence="1" type="primary">nrdR</name>
    <name type="ordered locus">Ecaj_0125</name>
</gene>
<name>NRDR_EHRCJ</name>
<organism>
    <name type="scientific">Ehrlichia canis (strain Jake)</name>
    <dbReference type="NCBI Taxonomy" id="269484"/>
    <lineage>
        <taxon>Bacteria</taxon>
        <taxon>Pseudomonadati</taxon>
        <taxon>Pseudomonadota</taxon>
        <taxon>Alphaproteobacteria</taxon>
        <taxon>Rickettsiales</taxon>
        <taxon>Anaplasmataceae</taxon>
        <taxon>Ehrlichia</taxon>
    </lineage>
</organism>
<reference key="1">
    <citation type="journal article" date="2006" name="J. Bacteriol.">
        <title>The genome of the obligately intracellular bacterium Ehrlichia canis reveals themes of complex membrane structure and immune evasion strategies.</title>
        <authorList>
            <person name="Mavromatis K."/>
            <person name="Doyle C.K."/>
            <person name="Lykidis A."/>
            <person name="Ivanova N."/>
            <person name="Francino M.P."/>
            <person name="Chain P."/>
            <person name="Shin M."/>
            <person name="Malfatti S."/>
            <person name="Larimer F."/>
            <person name="Copeland A."/>
            <person name="Detter J.C."/>
            <person name="Land M."/>
            <person name="Richardson P.M."/>
            <person name="Yu X.J."/>
            <person name="Walker D.H."/>
            <person name="McBride J.W."/>
            <person name="Kyrpides N.C."/>
        </authorList>
    </citation>
    <scope>NUCLEOTIDE SEQUENCE [LARGE SCALE GENOMIC DNA]</scope>
    <source>
        <strain>Jake</strain>
    </source>
</reference>
<comment type="function">
    <text evidence="1">Negatively regulates transcription of bacterial ribonucleotide reductase nrd genes and operons by binding to NrdR-boxes.</text>
</comment>
<comment type="cofactor">
    <cofactor evidence="1">
        <name>Zn(2+)</name>
        <dbReference type="ChEBI" id="CHEBI:29105"/>
    </cofactor>
    <text evidence="1">Binds 1 zinc ion.</text>
</comment>
<comment type="similarity">
    <text evidence="1">Belongs to the NrdR family.</text>
</comment>
<feature type="chain" id="PRO_0000230867" description="Transcriptional repressor NrdR">
    <location>
        <begin position="1"/>
        <end position="153"/>
    </location>
</feature>
<feature type="domain" description="ATP-cone" evidence="1">
    <location>
        <begin position="49"/>
        <end position="139"/>
    </location>
</feature>
<feature type="zinc finger region" evidence="1">
    <location>
        <begin position="3"/>
        <end position="34"/>
    </location>
</feature>
<protein>
    <recommendedName>
        <fullName evidence="1">Transcriptional repressor NrdR</fullName>
    </recommendedName>
</protein>
<keyword id="KW-0067">ATP-binding</keyword>
<keyword id="KW-0238">DNA-binding</keyword>
<keyword id="KW-0479">Metal-binding</keyword>
<keyword id="KW-0547">Nucleotide-binding</keyword>
<keyword id="KW-0678">Repressor</keyword>
<keyword id="KW-0804">Transcription</keyword>
<keyword id="KW-0805">Transcription regulation</keyword>
<keyword id="KW-0862">Zinc</keyword>
<keyword id="KW-0863">Zinc-finger</keyword>
<evidence type="ECO:0000255" key="1">
    <source>
        <dbReference type="HAMAP-Rule" id="MF_00440"/>
    </source>
</evidence>
<proteinExistence type="inferred from homology"/>
<accession>Q3YSX9</accession>